<reference key="1">
    <citation type="journal article" date="2010" name="Nature">
        <title>Comparative genomics reveals mobile pathogenicity chromosomes in Fusarium.</title>
        <authorList>
            <person name="Ma L.-J."/>
            <person name="van der Does H.C."/>
            <person name="Borkovich K.A."/>
            <person name="Coleman J.J."/>
            <person name="Daboussi M.-J."/>
            <person name="Di Pietro A."/>
            <person name="Dufresne M."/>
            <person name="Freitag M."/>
            <person name="Grabherr M."/>
            <person name="Henrissat B."/>
            <person name="Houterman P.M."/>
            <person name="Kang S."/>
            <person name="Shim W.-B."/>
            <person name="Woloshuk C."/>
            <person name="Xie X."/>
            <person name="Xu J.-R."/>
            <person name="Antoniw J."/>
            <person name="Baker S.E."/>
            <person name="Bluhm B.H."/>
            <person name="Breakspear A."/>
            <person name="Brown D.W."/>
            <person name="Butchko R.A.E."/>
            <person name="Chapman S."/>
            <person name="Coulson R."/>
            <person name="Coutinho P.M."/>
            <person name="Danchin E.G.J."/>
            <person name="Diener A."/>
            <person name="Gale L.R."/>
            <person name="Gardiner D.M."/>
            <person name="Goff S."/>
            <person name="Hammond-Kosack K.E."/>
            <person name="Hilburn K."/>
            <person name="Hua-Van A."/>
            <person name="Jonkers W."/>
            <person name="Kazan K."/>
            <person name="Kodira C.D."/>
            <person name="Koehrsen M."/>
            <person name="Kumar L."/>
            <person name="Lee Y.-H."/>
            <person name="Li L."/>
            <person name="Manners J.M."/>
            <person name="Miranda-Saavedra D."/>
            <person name="Mukherjee M."/>
            <person name="Park G."/>
            <person name="Park J."/>
            <person name="Park S.-Y."/>
            <person name="Proctor R.H."/>
            <person name="Regev A."/>
            <person name="Ruiz-Roldan M.C."/>
            <person name="Sain D."/>
            <person name="Sakthikumar S."/>
            <person name="Sykes S."/>
            <person name="Schwartz D.C."/>
            <person name="Turgeon B.G."/>
            <person name="Wapinski I."/>
            <person name="Yoder O."/>
            <person name="Young S."/>
            <person name="Zeng Q."/>
            <person name="Zhou S."/>
            <person name="Galagan J."/>
            <person name="Cuomo C.A."/>
            <person name="Kistler H.C."/>
            <person name="Rep M."/>
        </authorList>
    </citation>
    <scope>NUCLEOTIDE SEQUENCE [LARGE SCALE GENOMIC DNA]</scope>
    <source>
        <strain>M3125 / FGSC 7600</strain>
    </source>
</reference>
<reference key="2">
    <citation type="journal article" date="2006" name="Planta">
        <title>Fusaric acid induces apoptosis in saffron root-tip cells: roles of caspase-like activity, cytochrome c, and H2O2.</title>
        <authorList>
            <person name="Samadi L."/>
            <person name="Shahsavan Behboodi B."/>
        </authorList>
    </citation>
    <scope>BIOTECHNOLOGY</scope>
</reference>
<reference key="3">
    <citation type="journal article" date="2008" name="J. Appl. Microbiol.">
        <title>Bikaverin and fusaric acid from Fusarium oxysporum show antioomycete activity against Phytophthora infestans.</title>
        <authorList>
            <person name="Son S.W."/>
            <person name="Kim H.Y."/>
            <person name="Choi G.J."/>
            <person name="Lim H.K."/>
            <person name="Jang K.S."/>
            <person name="Lee S.O."/>
            <person name="Lee S."/>
            <person name="Sung N.D."/>
            <person name="Kim J.C."/>
        </authorList>
    </citation>
    <scope>BIOTECHNOLOGY</scope>
</reference>
<reference key="4">
    <citation type="journal article" date="2011" name="Arch. Pharm. Res.">
        <title>Antimycobacterial activity of fusaric acid from a mangrove endophyte and its metal complexes.</title>
        <authorList>
            <person name="Pan J.H."/>
            <person name="Chen Y."/>
            <person name="Huang Y.H."/>
            <person name="Tao Y.W."/>
            <person name="Wang J."/>
            <person name="Li Y."/>
            <person name="Peng Y."/>
            <person name="Dong T."/>
            <person name="Lai X.M."/>
            <person name="Lin Y.C."/>
        </authorList>
    </citation>
    <scope>BIOTECHNOLOGY</scope>
</reference>
<reference key="5">
    <citation type="journal article" date="2011" name="Toxicon">
        <title>Phytotoxicity of fusaric acid and analogs to cotton.</title>
        <authorList>
            <person name="Stipanovic R.D."/>
            <person name="Puckhaber L.S."/>
            <person name="Liu J."/>
            <person name="Bell A.A."/>
        </authorList>
    </citation>
    <scope>BIOTECHNOLOGY</scope>
</reference>
<reference key="6">
    <citation type="journal article" date="2012" name="Fungal Genet. Biol.">
        <title>Lae1 regulates expression of multiple secondary metabolite gene clusters in Fusarium verticillioides.</title>
        <authorList>
            <person name="Butchko R.A."/>
            <person name="Brown D.W."/>
            <person name="Busman M."/>
            <person name="Tudzynski B."/>
            <person name="Wiemann P."/>
        </authorList>
    </citation>
    <scope>INDUCTION</scope>
</reference>
<reference key="7">
    <citation type="journal article" date="2012" name="Planta Med.">
        <title>In vitro acanthamoebicidal activity of fusaric acid and dehydrofusaric acid from an endophytic fungus Fusarium sp. Tlau3.</title>
        <authorList>
            <person name="Boonman N."/>
            <person name="Prachya S."/>
            <person name="Boonmee A."/>
            <person name="Kittakoop P."/>
            <person name="Wiyakrutta S."/>
            <person name="Sriubolmas N."/>
            <person name="Warit S."/>
            <person name="Dharmkrong-At Chusattayanond A."/>
        </authorList>
    </citation>
    <scope>BIOTECHNOLOGY</scope>
</reference>
<reference key="8">
    <citation type="journal article" date="2013" name="Planta">
        <title>Fusaric acid induction of programmed cell death modulated through nitric oxide signalling in tobacco suspension cells.</title>
        <authorList>
            <person name="Jiao J."/>
            <person name="Zhou B."/>
            <person name="Zhu X."/>
            <person name="Gao Z."/>
            <person name="Liang Y."/>
        </authorList>
    </citation>
    <scope>BIOTECHNOLOGY</scope>
</reference>
<reference key="9">
    <citation type="journal article" date="2013" name="PLoS ONE">
        <title>Contamination of bananas with beauvericin and fusaric acid produced by Fusarium oxysporum f. sp. cubense.</title>
        <authorList>
            <person name="Li C."/>
            <person name="Zuo C."/>
            <person name="Deng G."/>
            <person name="Kuang R."/>
            <person name="Yang Q."/>
            <person name="Hu C."/>
            <person name="Sheng O."/>
            <person name="Zhang S."/>
            <person name="Ma L."/>
            <person name="Wei Y."/>
            <person name="Yang J."/>
            <person name="Liu S."/>
            <person name="Biswas M.K."/>
            <person name="Viljoen A."/>
            <person name="Yi G."/>
        </authorList>
    </citation>
    <scope>BIOTECHNOLOGY</scope>
</reference>
<reference key="10">
    <citation type="journal article" date="2015" name="Mol. Plant Microbe Interact.">
        <title>Identification of a 12-gene fusaric acid biosynthetic gene cluster in Fusarium species through comparative and functional genomics.</title>
        <authorList>
            <person name="Brown D.W."/>
            <person name="Lee S.H."/>
            <person name="Kim L.H."/>
            <person name="Ryu J.G."/>
            <person name="Lee S."/>
            <person name="Seo Y."/>
            <person name="Kim Y.H."/>
            <person name="Busman M."/>
            <person name="Yun S.H."/>
            <person name="Proctor R.H."/>
            <person name="Lee T."/>
        </authorList>
    </citation>
    <scope>DISRUPTION PHENOTYPE</scope>
</reference>
<proteinExistence type="evidence at protein level"/>
<keyword id="KW-0238">DNA-binding</keyword>
<keyword id="KW-0479">Metal-binding</keyword>
<keyword id="KW-0539">Nucleus</keyword>
<keyword id="KW-1185">Reference proteome</keyword>
<keyword id="KW-0804">Transcription</keyword>
<keyword id="KW-0805">Transcription regulation</keyword>
<keyword id="KW-0862">Zinc</keyword>
<sequence length="661" mass="74808">MPLPSRASSTPKISKACVPCRTRKIKCNAAVVGLPCGSCVSRECPDECVLSARKRRTVKGRNAETPRSRKNIPDTNGSVLSPRQQQLPTNVSRQATDSSHSDPVEESIHASHTGSSLRNDTPHSRDRRPPGQTQADLLYLNILQDTVNDTSAAQTDASDHQSNDEPDDSFNSQIHHWNPPPQLDDVDNEYLAKKKVFELPPPRFMENIVKAYFDYVHPFAPILNRTDFIQSYRSGSCCLFLLHAVAAAASLYVTHDVLIGCGYQDRSTAQASFFSKAKLFHDFHCQGDPLSMLQGSMILGAIILDHPSDRDFQYWFHNSVRRASKMGVQNACLRDDGSQKLYRRIWWVLHNRDIFHFFINTQNMRLLANAPPIRPLTEADWETEDMEQWSGILSPISQAQKVSLIAQCELAQIFGNVMSVVTSSTPSAEEIHKRILPLDAWRTSLPERMQLMASFANGEKYHLEALTTSYRFECIMCRLLRRGRWQMSDGGLREWAQQRFRSAIFELDTIVKRVMINNTIQKLPTTFITTITALLALHIESALDAAESSLIRSMARISVQHTMLALDQIRDTPAIKRALPAFEIVLSKNKLYPMSTSDTEQISTIQTIPQDQTLSDGQILQPPPTDMTLPQDDQSFLYGDFIGFDFLDRWQMEQLDFTGIY</sequence>
<name>FUB12_GIBM7</name>
<protein>
    <recommendedName>
        <fullName evidence="13">Fusaric acid cluster transcription factor FUB12</fullName>
    </recommendedName>
    <alternativeName>
        <fullName evidence="13">Fusaric acid biosynthesis protein 12</fullName>
    </alternativeName>
</protein>
<comment type="function">
    <text evidence="1">Transcription factor that is involved in the formation of the two Fusaric acid derivatives, dehydrofusaric acid and fusarinolic acid, serving as a detoxification mechanism (By similarity).</text>
</comment>
<comment type="subcellular location">
    <subcellularLocation>
        <location evidence="2">Nucleus</location>
    </subcellularLocation>
</comment>
<comment type="induction">
    <text evidence="8">Expression is positively regulated by the secondary metabolism regulator LAE1 (PubMed:22713715).</text>
</comment>
<comment type="disruption phenotype">
    <text evidence="12">Substantially reduces production of fusaric acid (PubMed:25372119).</text>
</comment>
<comment type="biotechnology">
    <text evidence="4 5 6 7 9 10 11">Fusaric acid is phytotoxic to plants such as cotton and banana (PubMed:20955724, PubMed:23922960). It has been shown to induce programmed cell death in plants (PubMed:16868776, PubMed:23838885). In addition to a mild toxicity to animals, fusaric acid exhibits acanthamoebicidal, antioomycete, and antimycobacterial activities (PubMed:17927749, PubMed:21811925, PubMed:22864988).</text>
</comment>
<evidence type="ECO:0000250" key="1">
    <source>
        <dbReference type="UniProtKB" id="S0DRX3"/>
    </source>
</evidence>
<evidence type="ECO:0000255" key="2">
    <source>
        <dbReference type="PROSITE-ProRule" id="PRU00227"/>
    </source>
</evidence>
<evidence type="ECO:0000256" key="3">
    <source>
        <dbReference type="SAM" id="MobiDB-lite"/>
    </source>
</evidence>
<evidence type="ECO:0000269" key="4">
    <source>
    </source>
</evidence>
<evidence type="ECO:0000269" key="5">
    <source>
    </source>
</evidence>
<evidence type="ECO:0000269" key="6">
    <source>
    </source>
</evidence>
<evidence type="ECO:0000269" key="7">
    <source>
    </source>
</evidence>
<evidence type="ECO:0000269" key="8">
    <source>
    </source>
</evidence>
<evidence type="ECO:0000269" key="9">
    <source>
    </source>
</evidence>
<evidence type="ECO:0000269" key="10">
    <source>
    </source>
</evidence>
<evidence type="ECO:0000269" key="11">
    <source>
    </source>
</evidence>
<evidence type="ECO:0000269" key="12">
    <source>
    </source>
</evidence>
<evidence type="ECO:0000303" key="13">
    <source>
    </source>
</evidence>
<accession>W7MT41</accession>
<gene>
    <name evidence="13" type="primary">FUB12</name>
    <name type="ORF">FVEG_12534</name>
</gene>
<feature type="chain" id="PRO_0000437331" description="Fusaric acid cluster transcription factor FUB12">
    <location>
        <begin position="1"/>
        <end position="661"/>
    </location>
</feature>
<feature type="DNA-binding region" description="Zn(2)-C6 fungal-type" evidence="2">
    <location>
        <begin position="17"/>
        <end position="48"/>
    </location>
</feature>
<feature type="region of interest" description="Disordered" evidence="3">
    <location>
        <begin position="56"/>
        <end position="132"/>
    </location>
</feature>
<feature type="region of interest" description="Disordered" evidence="3">
    <location>
        <begin position="151"/>
        <end position="184"/>
    </location>
</feature>
<feature type="compositionally biased region" description="Polar residues" evidence="3">
    <location>
        <begin position="73"/>
        <end position="98"/>
    </location>
</feature>
<feature type="compositionally biased region" description="Basic and acidic residues" evidence="3">
    <location>
        <begin position="99"/>
        <end position="109"/>
    </location>
</feature>
<feature type="compositionally biased region" description="Polar residues" evidence="3">
    <location>
        <begin position="110"/>
        <end position="119"/>
    </location>
</feature>
<feature type="compositionally biased region" description="Basic and acidic residues" evidence="3">
    <location>
        <begin position="120"/>
        <end position="129"/>
    </location>
</feature>
<organism>
    <name type="scientific">Gibberella moniliformis (strain M3125 / FGSC 7600)</name>
    <name type="common">Maize ear and stalk rot fungus</name>
    <name type="synonym">Fusarium verticillioides</name>
    <dbReference type="NCBI Taxonomy" id="334819"/>
    <lineage>
        <taxon>Eukaryota</taxon>
        <taxon>Fungi</taxon>
        <taxon>Dikarya</taxon>
        <taxon>Ascomycota</taxon>
        <taxon>Pezizomycotina</taxon>
        <taxon>Sordariomycetes</taxon>
        <taxon>Hypocreomycetidae</taxon>
        <taxon>Hypocreales</taxon>
        <taxon>Nectriaceae</taxon>
        <taxon>Fusarium</taxon>
        <taxon>Fusarium fujikuroi species complex</taxon>
    </lineage>
</organism>
<dbReference type="EMBL" id="CM000580">
    <property type="protein sequence ID" value="EWG54281.1"/>
    <property type="molecule type" value="Genomic_DNA"/>
</dbReference>
<dbReference type="RefSeq" id="XP_018760472.1">
    <property type="nucleotide sequence ID" value="XM_018901877.1"/>
</dbReference>
<dbReference type="SMR" id="W7MT41"/>
<dbReference type="STRING" id="334819.W7MT41"/>
<dbReference type="EnsemblFungi" id="FVEG_12534T0">
    <property type="protein sequence ID" value="FVEG_12534T0"/>
    <property type="gene ID" value="FVEG_12534"/>
</dbReference>
<dbReference type="GeneID" id="30069967"/>
<dbReference type="KEGG" id="fvr:FVEG_12534"/>
<dbReference type="VEuPathDB" id="FungiDB:FVEG_12534"/>
<dbReference type="eggNOG" id="ENOG502SIT4">
    <property type="taxonomic scope" value="Eukaryota"/>
</dbReference>
<dbReference type="HOGENOM" id="CLU_023926_1_0_1"/>
<dbReference type="OMA" id="DRWQMEQ"/>
<dbReference type="OrthoDB" id="85270at110618"/>
<dbReference type="PHI-base" id="PHI:3380"/>
<dbReference type="Proteomes" id="UP000009096">
    <property type="component" value="Chromosome 3"/>
</dbReference>
<dbReference type="GO" id="GO:0005634">
    <property type="term" value="C:nucleus"/>
    <property type="evidence" value="ECO:0007669"/>
    <property type="project" value="UniProtKB-SubCell"/>
</dbReference>
<dbReference type="GO" id="GO:0003677">
    <property type="term" value="F:DNA binding"/>
    <property type="evidence" value="ECO:0007669"/>
    <property type="project" value="UniProtKB-KW"/>
</dbReference>
<dbReference type="GO" id="GO:0000981">
    <property type="term" value="F:DNA-binding transcription factor activity, RNA polymerase II-specific"/>
    <property type="evidence" value="ECO:0007669"/>
    <property type="project" value="InterPro"/>
</dbReference>
<dbReference type="GO" id="GO:0008270">
    <property type="term" value="F:zinc ion binding"/>
    <property type="evidence" value="ECO:0007669"/>
    <property type="project" value="InterPro"/>
</dbReference>
<dbReference type="GO" id="GO:0006351">
    <property type="term" value="P:DNA-templated transcription"/>
    <property type="evidence" value="ECO:0007669"/>
    <property type="project" value="InterPro"/>
</dbReference>
<dbReference type="CDD" id="cd12148">
    <property type="entry name" value="fungal_TF_MHR"/>
    <property type="match status" value="1"/>
</dbReference>
<dbReference type="CDD" id="cd00067">
    <property type="entry name" value="GAL4"/>
    <property type="match status" value="1"/>
</dbReference>
<dbReference type="Gene3D" id="4.10.240.10">
    <property type="entry name" value="Zn(2)-C6 fungal-type DNA-binding domain"/>
    <property type="match status" value="1"/>
</dbReference>
<dbReference type="InterPro" id="IPR052073">
    <property type="entry name" value="Amide_Lactam_Regulators"/>
</dbReference>
<dbReference type="InterPro" id="IPR007219">
    <property type="entry name" value="Transcription_factor_dom_fun"/>
</dbReference>
<dbReference type="InterPro" id="IPR036864">
    <property type="entry name" value="Zn2-C6_fun-type_DNA-bd_sf"/>
</dbReference>
<dbReference type="InterPro" id="IPR001138">
    <property type="entry name" value="Zn2Cys6_DnaBD"/>
</dbReference>
<dbReference type="PANTHER" id="PTHR47171">
    <property type="entry name" value="FARA-RELATED"/>
    <property type="match status" value="1"/>
</dbReference>
<dbReference type="PANTHER" id="PTHR47171:SF3">
    <property type="entry name" value="FARA-RELATED"/>
    <property type="match status" value="1"/>
</dbReference>
<dbReference type="Pfam" id="PF04082">
    <property type="entry name" value="Fungal_trans"/>
    <property type="match status" value="1"/>
</dbReference>
<dbReference type="Pfam" id="PF00172">
    <property type="entry name" value="Zn_clus"/>
    <property type="match status" value="1"/>
</dbReference>
<dbReference type="SMART" id="SM00066">
    <property type="entry name" value="GAL4"/>
    <property type="match status" value="1"/>
</dbReference>
<dbReference type="SUPFAM" id="SSF57701">
    <property type="entry name" value="Zn2/Cys6 DNA-binding domain"/>
    <property type="match status" value="1"/>
</dbReference>
<dbReference type="PROSITE" id="PS00463">
    <property type="entry name" value="ZN2_CY6_FUNGAL_1"/>
    <property type="match status" value="1"/>
</dbReference>
<dbReference type="PROSITE" id="PS50048">
    <property type="entry name" value="ZN2_CY6_FUNGAL_2"/>
    <property type="match status" value="1"/>
</dbReference>